<evidence type="ECO:0000255" key="1">
    <source>
        <dbReference type="HAMAP-Rule" id="MF_00507"/>
    </source>
</evidence>
<evidence type="ECO:0000256" key="2">
    <source>
        <dbReference type="SAM" id="MobiDB-lite"/>
    </source>
</evidence>
<feature type="chain" id="PRO_1000060851" description="UPF0181 protein YpsIP31758_2352">
    <location>
        <begin position="1"/>
        <end position="85"/>
    </location>
</feature>
<feature type="region of interest" description="Disordered" evidence="2">
    <location>
        <begin position="50"/>
        <end position="85"/>
    </location>
</feature>
<feature type="compositionally biased region" description="Basic and acidic residues" evidence="2">
    <location>
        <begin position="55"/>
        <end position="72"/>
    </location>
</feature>
<feature type="compositionally biased region" description="Acidic residues" evidence="2">
    <location>
        <begin position="73"/>
        <end position="85"/>
    </location>
</feature>
<comment type="similarity">
    <text evidence="1">Belongs to the UPF0181 family.</text>
</comment>
<name>Y2352_YERP3</name>
<reference key="1">
    <citation type="journal article" date="2007" name="PLoS Genet.">
        <title>The complete genome sequence of Yersinia pseudotuberculosis IP31758, the causative agent of Far East scarlet-like fever.</title>
        <authorList>
            <person name="Eppinger M."/>
            <person name="Rosovitz M.J."/>
            <person name="Fricke W.F."/>
            <person name="Rasko D.A."/>
            <person name="Kokorina G."/>
            <person name="Fayolle C."/>
            <person name="Lindler L.E."/>
            <person name="Carniel E."/>
            <person name="Ravel J."/>
        </authorList>
    </citation>
    <scope>NUCLEOTIDE SEQUENCE [LARGE SCALE GENOMIC DNA]</scope>
    <source>
        <strain>IP 31758</strain>
    </source>
</reference>
<protein>
    <recommendedName>
        <fullName evidence="1">UPF0181 protein YpsIP31758_2352</fullName>
    </recommendedName>
</protein>
<accession>A7FJ93</accession>
<proteinExistence type="inferred from homology"/>
<dbReference type="EMBL" id="CP000720">
    <property type="protein sequence ID" value="ABS49245.1"/>
    <property type="molecule type" value="Genomic_DNA"/>
</dbReference>
<dbReference type="RefSeq" id="WP_002211082.1">
    <property type="nucleotide sequence ID" value="NC_009708.1"/>
</dbReference>
<dbReference type="SMR" id="A7FJ93"/>
<dbReference type="KEGG" id="ypi:YpsIP31758_2352"/>
<dbReference type="HOGENOM" id="CLU_185263_0_0_6"/>
<dbReference type="Proteomes" id="UP000002412">
    <property type="component" value="Chromosome"/>
</dbReference>
<dbReference type="HAMAP" id="MF_00507">
    <property type="entry name" value="UPF0181"/>
    <property type="match status" value="1"/>
</dbReference>
<dbReference type="InterPro" id="IPR005371">
    <property type="entry name" value="UPF0181"/>
</dbReference>
<dbReference type="NCBIfam" id="NF003476">
    <property type="entry name" value="PRK05114.1"/>
    <property type="match status" value="1"/>
</dbReference>
<dbReference type="Pfam" id="PF03701">
    <property type="entry name" value="UPF0181"/>
    <property type="match status" value="1"/>
</dbReference>
<sequence length="85" mass="9720">MLAGMPSLSHEEQQEAVERIHKFMSEGMSSGEAIALVAAEIRERHQNDPQAMAIFEDHDFDEHTESDYRRDDEPDADDIEDPYEG</sequence>
<gene>
    <name type="ordered locus">YpsIP31758_2352</name>
</gene>
<organism>
    <name type="scientific">Yersinia pseudotuberculosis serotype O:1b (strain IP 31758)</name>
    <dbReference type="NCBI Taxonomy" id="349747"/>
    <lineage>
        <taxon>Bacteria</taxon>
        <taxon>Pseudomonadati</taxon>
        <taxon>Pseudomonadota</taxon>
        <taxon>Gammaproteobacteria</taxon>
        <taxon>Enterobacterales</taxon>
        <taxon>Yersiniaceae</taxon>
        <taxon>Yersinia</taxon>
    </lineage>
</organism>